<proteinExistence type="inferred from homology"/>
<protein>
    <recommendedName>
        <fullName evidence="1">Integration host factor subunit alpha</fullName>
        <shortName evidence="1">IHF-alpha</shortName>
    </recommendedName>
</protein>
<evidence type="ECO:0000255" key="1">
    <source>
        <dbReference type="HAMAP-Rule" id="MF_00380"/>
    </source>
</evidence>
<evidence type="ECO:0000256" key="2">
    <source>
        <dbReference type="SAM" id="MobiDB-lite"/>
    </source>
</evidence>
<dbReference type="EMBL" id="CT573326">
    <property type="protein sequence ID" value="CAK14804.1"/>
    <property type="molecule type" value="Genomic_DNA"/>
</dbReference>
<dbReference type="RefSeq" id="WP_009394049.1">
    <property type="nucleotide sequence ID" value="NC_008027.1"/>
</dbReference>
<dbReference type="SMR" id="Q1IC09"/>
<dbReference type="STRING" id="384676.PSEEN1969"/>
<dbReference type="GeneID" id="93677371"/>
<dbReference type="KEGG" id="pen:PSEEN1969"/>
<dbReference type="eggNOG" id="COG0776">
    <property type="taxonomic scope" value="Bacteria"/>
</dbReference>
<dbReference type="HOGENOM" id="CLU_105066_1_3_6"/>
<dbReference type="OrthoDB" id="9797747at2"/>
<dbReference type="Proteomes" id="UP000000658">
    <property type="component" value="Chromosome"/>
</dbReference>
<dbReference type="GO" id="GO:0005829">
    <property type="term" value="C:cytosol"/>
    <property type="evidence" value="ECO:0007669"/>
    <property type="project" value="TreeGrafter"/>
</dbReference>
<dbReference type="GO" id="GO:0003677">
    <property type="term" value="F:DNA binding"/>
    <property type="evidence" value="ECO:0007669"/>
    <property type="project" value="UniProtKB-UniRule"/>
</dbReference>
<dbReference type="GO" id="GO:0030527">
    <property type="term" value="F:structural constituent of chromatin"/>
    <property type="evidence" value="ECO:0007669"/>
    <property type="project" value="InterPro"/>
</dbReference>
<dbReference type="GO" id="GO:0006310">
    <property type="term" value="P:DNA recombination"/>
    <property type="evidence" value="ECO:0007669"/>
    <property type="project" value="UniProtKB-UniRule"/>
</dbReference>
<dbReference type="GO" id="GO:0009893">
    <property type="term" value="P:positive regulation of metabolic process"/>
    <property type="evidence" value="ECO:0007669"/>
    <property type="project" value="UniProtKB-ARBA"/>
</dbReference>
<dbReference type="GO" id="GO:0006355">
    <property type="term" value="P:regulation of DNA-templated transcription"/>
    <property type="evidence" value="ECO:0007669"/>
    <property type="project" value="UniProtKB-UniRule"/>
</dbReference>
<dbReference type="GO" id="GO:0006417">
    <property type="term" value="P:regulation of translation"/>
    <property type="evidence" value="ECO:0007669"/>
    <property type="project" value="UniProtKB-UniRule"/>
</dbReference>
<dbReference type="CDD" id="cd13835">
    <property type="entry name" value="IHF_A"/>
    <property type="match status" value="1"/>
</dbReference>
<dbReference type="FunFam" id="4.10.520.10:FF:000002">
    <property type="entry name" value="Integration host factor subunit alpha"/>
    <property type="match status" value="1"/>
</dbReference>
<dbReference type="Gene3D" id="4.10.520.10">
    <property type="entry name" value="IHF-like DNA-binding proteins"/>
    <property type="match status" value="1"/>
</dbReference>
<dbReference type="HAMAP" id="MF_00380">
    <property type="entry name" value="IHF_alpha"/>
    <property type="match status" value="1"/>
</dbReference>
<dbReference type="InterPro" id="IPR000119">
    <property type="entry name" value="Hist_DNA-bd"/>
</dbReference>
<dbReference type="InterPro" id="IPR020816">
    <property type="entry name" value="Histone-like_DNA-bd_CS"/>
</dbReference>
<dbReference type="InterPro" id="IPR010992">
    <property type="entry name" value="IHF-like_DNA-bd_dom_sf"/>
</dbReference>
<dbReference type="InterPro" id="IPR005684">
    <property type="entry name" value="IHF_alpha"/>
</dbReference>
<dbReference type="NCBIfam" id="TIGR00987">
    <property type="entry name" value="himA"/>
    <property type="match status" value="1"/>
</dbReference>
<dbReference type="NCBIfam" id="NF001401">
    <property type="entry name" value="PRK00285.1"/>
    <property type="match status" value="1"/>
</dbReference>
<dbReference type="PANTHER" id="PTHR33175">
    <property type="entry name" value="DNA-BINDING PROTEIN HU"/>
    <property type="match status" value="1"/>
</dbReference>
<dbReference type="PANTHER" id="PTHR33175:SF2">
    <property type="entry name" value="INTEGRATION HOST FACTOR SUBUNIT ALPHA"/>
    <property type="match status" value="1"/>
</dbReference>
<dbReference type="Pfam" id="PF00216">
    <property type="entry name" value="Bac_DNA_binding"/>
    <property type="match status" value="1"/>
</dbReference>
<dbReference type="PRINTS" id="PR01727">
    <property type="entry name" value="DNABINDINGHU"/>
</dbReference>
<dbReference type="SMART" id="SM00411">
    <property type="entry name" value="BHL"/>
    <property type="match status" value="1"/>
</dbReference>
<dbReference type="SUPFAM" id="SSF47729">
    <property type="entry name" value="IHF-like DNA-binding proteins"/>
    <property type="match status" value="1"/>
</dbReference>
<dbReference type="PROSITE" id="PS00045">
    <property type="entry name" value="HISTONE_LIKE"/>
    <property type="match status" value="1"/>
</dbReference>
<keyword id="KW-0233">DNA recombination</keyword>
<keyword id="KW-0238">DNA-binding</keyword>
<keyword id="KW-0804">Transcription</keyword>
<keyword id="KW-0805">Transcription regulation</keyword>
<keyword id="KW-0810">Translation regulation</keyword>
<accession>Q1IC09</accession>
<reference key="1">
    <citation type="journal article" date="2006" name="Nat. Biotechnol.">
        <title>Complete genome sequence of the entomopathogenic and metabolically versatile soil bacterium Pseudomonas entomophila.</title>
        <authorList>
            <person name="Vodovar N."/>
            <person name="Vallenet D."/>
            <person name="Cruveiller S."/>
            <person name="Rouy Z."/>
            <person name="Barbe V."/>
            <person name="Acosta C."/>
            <person name="Cattolico L."/>
            <person name="Jubin C."/>
            <person name="Lajus A."/>
            <person name="Segurens B."/>
            <person name="Vacherie B."/>
            <person name="Wincker P."/>
            <person name="Weissenbach J."/>
            <person name="Lemaitre B."/>
            <person name="Medigue C."/>
            <person name="Boccard F."/>
        </authorList>
    </citation>
    <scope>NUCLEOTIDE SEQUENCE [LARGE SCALE GENOMIC DNA]</scope>
    <source>
        <strain>L48</strain>
    </source>
</reference>
<sequence length="100" mass="11486">MGALTKAEMAERLYEELGLNKREAKELVELFFEEIRHALEDNEQVKLSGFGNFDLRDKRQRPGRNPKTGEEIPITARRVVTFRPGQKLKARVEAYAGTKP</sequence>
<gene>
    <name evidence="1" type="primary">ihfA</name>
    <name evidence="1" type="synonym">himA</name>
    <name type="ordered locus">PSEEN1969</name>
</gene>
<organism>
    <name type="scientific">Pseudomonas entomophila (strain L48)</name>
    <dbReference type="NCBI Taxonomy" id="384676"/>
    <lineage>
        <taxon>Bacteria</taxon>
        <taxon>Pseudomonadati</taxon>
        <taxon>Pseudomonadota</taxon>
        <taxon>Gammaproteobacteria</taxon>
        <taxon>Pseudomonadales</taxon>
        <taxon>Pseudomonadaceae</taxon>
        <taxon>Pseudomonas</taxon>
    </lineage>
</organism>
<comment type="function">
    <text evidence="1">This protein is one of the two subunits of integration host factor, a specific DNA-binding protein that functions in genetic recombination as well as in transcriptional and translational control.</text>
</comment>
<comment type="subunit">
    <text evidence="1">Heterodimer of an alpha and a beta chain.</text>
</comment>
<comment type="similarity">
    <text evidence="1">Belongs to the bacterial histone-like protein family.</text>
</comment>
<feature type="chain" id="PRO_0000277757" description="Integration host factor subunit alpha">
    <location>
        <begin position="1"/>
        <end position="100"/>
    </location>
</feature>
<feature type="region of interest" description="Disordered" evidence="2">
    <location>
        <begin position="53"/>
        <end position="72"/>
    </location>
</feature>
<name>IHFA_PSEE4</name>